<dbReference type="EC" id="7.1.1.-"/>
<dbReference type="EMBL" id="EF380353">
    <property type="protein sequence ID" value="ABR01488.1"/>
    <property type="molecule type" value="Genomic_DNA"/>
</dbReference>
<dbReference type="RefSeq" id="YP_001294411.1">
    <property type="nucleotide sequence ID" value="NC_009601.1"/>
</dbReference>
<dbReference type="SMR" id="A6MMR6"/>
<dbReference type="GeneID" id="5236644"/>
<dbReference type="GO" id="GO:0009535">
    <property type="term" value="C:chloroplast thylakoid membrane"/>
    <property type="evidence" value="ECO:0007669"/>
    <property type="project" value="UniProtKB-SubCell"/>
</dbReference>
<dbReference type="GO" id="GO:0008137">
    <property type="term" value="F:NADH dehydrogenase (ubiquinone) activity"/>
    <property type="evidence" value="ECO:0007669"/>
    <property type="project" value="InterPro"/>
</dbReference>
<dbReference type="GO" id="GO:0048038">
    <property type="term" value="F:quinone binding"/>
    <property type="evidence" value="ECO:0007669"/>
    <property type="project" value="UniProtKB-KW"/>
</dbReference>
<dbReference type="GO" id="GO:0042773">
    <property type="term" value="P:ATP synthesis coupled electron transport"/>
    <property type="evidence" value="ECO:0007669"/>
    <property type="project" value="InterPro"/>
</dbReference>
<dbReference type="GO" id="GO:0015990">
    <property type="term" value="P:electron transport coupled proton transport"/>
    <property type="evidence" value="ECO:0007669"/>
    <property type="project" value="TreeGrafter"/>
</dbReference>
<dbReference type="Gene3D" id="1.20.5.2700">
    <property type="match status" value="1"/>
</dbReference>
<dbReference type="InterPro" id="IPR002128">
    <property type="entry name" value="NADH_UbQ_OxRdtase_chlpt_su5_C"/>
</dbReference>
<dbReference type="InterPro" id="IPR018393">
    <property type="entry name" value="NADHpl_OxRdtase_5_subgr"/>
</dbReference>
<dbReference type="InterPro" id="IPR001750">
    <property type="entry name" value="ND/Mrp_TM"/>
</dbReference>
<dbReference type="InterPro" id="IPR003945">
    <property type="entry name" value="NU5C-like"/>
</dbReference>
<dbReference type="InterPro" id="IPR001516">
    <property type="entry name" value="Proton_antipo_N"/>
</dbReference>
<dbReference type="NCBIfam" id="TIGR01974">
    <property type="entry name" value="NDH_I_L"/>
    <property type="match status" value="1"/>
</dbReference>
<dbReference type="NCBIfam" id="NF005141">
    <property type="entry name" value="PRK06590.1"/>
    <property type="match status" value="1"/>
</dbReference>
<dbReference type="PANTHER" id="PTHR42829">
    <property type="entry name" value="NADH-UBIQUINONE OXIDOREDUCTASE CHAIN 5"/>
    <property type="match status" value="1"/>
</dbReference>
<dbReference type="PANTHER" id="PTHR42829:SF2">
    <property type="entry name" value="NADH-UBIQUINONE OXIDOREDUCTASE CHAIN 5"/>
    <property type="match status" value="1"/>
</dbReference>
<dbReference type="Pfam" id="PF01010">
    <property type="entry name" value="Proton_antipo_C"/>
    <property type="match status" value="1"/>
</dbReference>
<dbReference type="Pfam" id="PF00361">
    <property type="entry name" value="Proton_antipo_M"/>
    <property type="match status" value="1"/>
</dbReference>
<dbReference type="Pfam" id="PF00662">
    <property type="entry name" value="Proton_antipo_N"/>
    <property type="match status" value="1"/>
</dbReference>
<dbReference type="PRINTS" id="PR01434">
    <property type="entry name" value="NADHDHGNASE5"/>
</dbReference>
<dbReference type="PRINTS" id="PR01435">
    <property type="entry name" value="NPOXDRDTASE5"/>
</dbReference>
<sequence>MEHTYQYAYIILFLPLPVTMSIGFGLLFVPTATKNIRRMWAFVSVLLLSMVMGFSVNLAIQQINGSFIYQYLCSWTINNDFSLEFGYLIDPLTSIMSLLISTVGIMVLMYSDNYMSHDQGYLRFFAYMSFFNTSMLGLVTSSNLIQIHIFWELVGMCSYLLIGFWFTRPIAASACQKAFVINRVGDFGLLLGILGFYWITGSLEFRDLFEIVNNLIHNNGVNFRFAILCACLLFLGAVAKSAQFPLHVWLPDAMEGPTPISALIHAATMVAAGIFLVARLRPLFIVIPYIMNLISLIGIITLLLGATLALAQGDIKRSLAYSTVSQLGYIMLALGIGSYRAALFHLITHAYSKALLFLGSGSIIHSMEPVVGYSPDKSQNMVLMGGLKKYVPVTRTTFLLGTLSLCGIPPLACFWSKDEILTDSWLYSPIFAIIAYFTAGLTAFYMFRVYLLTFDGCLRVHFQNYSSTKRSLFCSMSVSVWGREPLKIDNQNLPFLILKRNINNNKVFFFSFFSKGTYKNKIYNNVINRMQYFRTYFQNKYTYMYPHESENTVLFPLLVLVLFTLVVGLIGIPFDQGVIDFDILSKWLTNPFQKNLNHSVDWYEFLTNAIFSVSVSLFGLFIASIFYGSVYSSFQNLDLINFFVKRGPRRILLDQIKNVIYNWSYNRGYIDIFYTKGLTMSIRRLSKLIQFFDRYIIDGITNGIGVASFFIGEGIRYIGGGRISSYLFLYLSYVSIFLIFYQYFDF</sequence>
<name>NU5C_DIOEL</name>
<evidence type="ECO:0000250" key="1"/>
<evidence type="ECO:0000255" key="2"/>
<evidence type="ECO:0000305" key="3"/>
<feature type="chain" id="PRO_0000360931" description="NAD(P)H-quinone oxidoreductase subunit 5, chloroplastic">
    <location>
        <begin position="1"/>
        <end position="746"/>
    </location>
</feature>
<feature type="transmembrane region" description="Helical" evidence="2">
    <location>
        <begin position="9"/>
        <end position="29"/>
    </location>
</feature>
<feature type="transmembrane region" description="Helical" evidence="2">
    <location>
        <begin position="40"/>
        <end position="60"/>
    </location>
</feature>
<feature type="transmembrane region" description="Helical" evidence="2">
    <location>
        <begin position="88"/>
        <end position="108"/>
    </location>
</feature>
<feature type="transmembrane region" description="Helical" evidence="2">
    <location>
        <begin position="125"/>
        <end position="145"/>
    </location>
</feature>
<feature type="transmembrane region" description="Helical" evidence="2">
    <location>
        <begin position="147"/>
        <end position="167"/>
    </location>
</feature>
<feature type="transmembrane region" description="Helical" evidence="2">
    <location>
        <begin position="185"/>
        <end position="205"/>
    </location>
</feature>
<feature type="transmembrane region" description="Helical" evidence="2">
    <location>
        <begin position="225"/>
        <end position="245"/>
    </location>
</feature>
<feature type="transmembrane region" description="Helical" evidence="2">
    <location>
        <begin position="258"/>
        <end position="278"/>
    </location>
</feature>
<feature type="transmembrane region" description="Helical" evidence="2">
    <location>
        <begin position="283"/>
        <end position="303"/>
    </location>
</feature>
<feature type="transmembrane region" description="Helical" evidence="2">
    <location>
        <begin position="327"/>
        <end position="347"/>
    </location>
</feature>
<feature type="transmembrane region" description="Helical" evidence="2">
    <location>
        <begin position="354"/>
        <end position="374"/>
    </location>
</feature>
<feature type="transmembrane region" description="Helical" evidence="2">
    <location>
        <begin position="396"/>
        <end position="416"/>
    </location>
</feature>
<feature type="transmembrane region" description="Helical" evidence="2">
    <location>
        <begin position="425"/>
        <end position="445"/>
    </location>
</feature>
<feature type="transmembrane region" description="Helical" evidence="2">
    <location>
        <begin position="554"/>
        <end position="574"/>
    </location>
</feature>
<feature type="transmembrane region" description="Helical" evidence="2">
    <location>
        <begin position="610"/>
        <end position="630"/>
    </location>
</feature>
<feature type="transmembrane region" description="Helical" evidence="2">
    <location>
        <begin position="726"/>
        <end position="746"/>
    </location>
</feature>
<gene>
    <name type="primary">ndhF</name>
</gene>
<accession>A6MMR6</accession>
<organism>
    <name type="scientific">Dioscorea elephantipes</name>
    <name type="common">Elephant's foot yam</name>
    <name type="synonym">Testudinaria elephantipes</name>
    <dbReference type="NCBI Taxonomy" id="145284"/>
    <lineage>
        <taxon>Eukaryota</taxon>
        <taxon>Viridiplantae</taxon>
        <taxon>Streptophyta</taxon>
        <taxon>Embryophyta</taxon>
        <taxon>Tracheophyta</taxon>
        <taxon>Spermatophyta</taxon>
        <taxon>Magnoliopsida</taxon>
        <taxon>Liliopsida</taxon>
        <taxon>Dioscoreales</taxon>
        <taxon>Dioscoreaceae</taxon>
        <taxon>Dioscorea</taxon>
    </lineage>
</organism>
<keyword id="KW-0150">Chloroplast</keyword>
<keyword id="KW-0472">Membrane</keyword>
<keyword id="KW-0520">NAD</keyword>
<keyword id="KW-0521">NADP</keyword>
<keyword id="KW-0934">Plastid</keyword>
<keyword id="KW-0618">Plastoquinone</keyword>
<keyword id="KW-0874">Quinone</keyword>
<keyword id="KW-0793">Thylakoid</keyword>
<keyword id="KW-1278">Translocase</keyword>
<keyword id="KW-0812">Transmembrane</keyword>
<keyword id="KW-1133">Transmembrane helix</keyword>
<keyword id="KW-0813">Transport</keyword>
<proteinExistence type="inferred from homology"/>
<reference key="1">
    <citation type="journal article" date="2007" name="Mol. Phylogenet. Evol.">
        <title>Phylogenetic and evolutionary implications of complete chloroplast genome sequences of four early-diverging angiosperms: Buxus (Buxaceae), Chloranthus (Chloranthaceae), Dioscorea (Dioscoreaceae), and Illicium (Schisandraceae).</title>
        <authorList>
            <person name="Hansen D.R."/>
            <person name="Dastidar S.G."/>
            <person name="Cai Z."/>
            <person name="Penaflor C."/>
            <person name="Kuehl J.V."/>
            <person name="Boore J.L."/>
            <person name="Jansen R.K."/>
        </authorList>
    </citation>
    <scope>NUCLEOTIDE SEQUENCE [LARGE SCALE GENOMIC DNA]</scope>
</reference>
<geneLocation type="chloroplast"/>
<protein>
    <recommendedName>
        <fullName>NAD(P)H-quinone oxidoreductase subunit 5, chloroplastic</fullName>
        <ecNumber>7.1.1.-</ecNumber>
    </recommendedName>
    <alternativeName>
        <fullName>NAD(P)H dehydrogenase subunit 5</fullName>
    </alternativeName>
    <alternativeName>
        <fullName>NADH-plastoquinone oxidoreductase subunit 5</fullName>
    </alternativeName>
</protein>
<comment type="function">
    <text evidence="1">NDH shuttles electrons from NAD(P)H:plastoquinone, via FMN and iron-sulfur (Fe-S) centers, to quinones in the photosynthetic chain and possibly in a chloroplast respiratory chain. The immediate electron acceptor for the enzyme in this species is believed to be plastoquinone. Couples the redox reaction to proton translocation, and thus conserves the redox energy in a proton gradient (By similarity).</text>
</comment>
<comment type="catalytic activity">
    <reaction>
        <text>a plastoquinone + NADH + (n+1) H(+)(in) = a plastoquinol + NAD(+) + n H(+)(out)</text>
        <dbReference type="Rhea" id="RHEA:42608"/>
        <dbReference type="Rhea" id="RHEA-COMP:9561"/>
        <dbReference type="Rhea" id="RHEA-COMP:9562"/>
        <dbReference type="ChEBI" id="CHEBI:15378"/>
        <dbReference type="ChEBI" id="CHEBI:17757"/>
        <dbReference type="ChEBI" id="CHEBI:57540"/>
        <dbReference type="ChEBI" id="CHEBI:57945"/>
        <dbReference type="ChEBI" id="CHEBI:62192"/>
    </reaction>
</comment>
<comment type="catalytic activity">
    <reaction>
        <text>a plastoquinone + NADPH + (n+1) H(+)(in) = a plastoquinol + NADP(+) + n H(+)(out)</text>
        <dbReference type="Rhea" id="RHEA:42612"/>
        <dbReference type="Rhea" id="RHEA-COMP:9561"/>
        <dbReference type="Rhea" id="RHEA-COMP:9562"/>
        <dbReference type="ChEBI" id="CHEBI:15378"/>
        <dbReference type="ChEBI" id="CHEBI:17757"/>
        <dbReference type="ChEBI" id="CHEBI:57783"/>
        <dbReference type="ChEBI" id="CHEBI:58349"/>
        <dbReference type="ChEBI" id="CHEBI:62192"/>
    </reaction>
</comment>
<comment type="subunit">
    <text evidence="1">NDH is composed of at least 16 different subunits, 5 of which are encoded in the nucleus.</text>
</comment>
<comment type="subcellular location">
    <subcellularLocation>
        <location evidence="1">Plastid</location>
        <location evidence="1">Chloroplast thylakoid membrane</location>
        <topology evidence="1">Multi-pass membrane protein</topology>
    </subcellularLocation>
</comment>
<comment type="similarity">
    <text evidence="3">Belongs to the complex I subunit 5 family.</text>
</comment>